<name>PLRKT_RAT</name>
<accession>D4ACN8</accession>
<organism>
    <name type="scientific">Rattus norvegicus</name>
    <name type="common">Rat</name>
    <dbReference type="NCBI Taxonomy" id="10116"/>
    <lineage>
        <taxon>Eukaryota</taxon>
        <taxon>Metazoa</taxon>
        <taxon>Chordata</taxon>
        <taxon>Craniata</taxon>
        <taxon>Vertebrata</taxon>
        <taxon>Euteleostomi</taxon>
        <taxon>Mammalia</taxon>
        <taxon>Eutheria</taxon>
        <taxon>Euarchontoglires</taxon>
        <taxon>Glires</taxon>
        <taxon>Rodentia</taxon>
        <taxon>Myomorpha</taxon>
        <taxon>Muroidea</taxon>
        <taxon>Muridae</taxon>
        <taxon>Murinae</taxon>
        <taxon>Rattus</taxon>
    </lineage>
</organism>
<keyword id="KW-1003">Cell membrane</keyword>
<keyword id="KW-0145">Chemotaxis</keyword>
<keyword id="KW-0395">Inflammatory response</keyword>
<keyword id="KW-0472">Membrane</keyword>
<keyword id="KW-0617">Plasminogen activation</keyword>
<keyword id="KW-1185">Reference proteome</keyword>
<keyword id="KW-0812">Transmembrane</keyword>
<keyword id="KW-1133">Transmembrane helix</keyword>
<evidence type="ECO:0000250" key="1"/>
<evidence type="ECO:0000255" key="2"/>
<evidence type="ECO:0000269" key="3">
    <source>
    </source>
</evidence>
<sequence length="147" mass="17312">MGFIFSKSMNENMKNQQEFMVMHARLQLERQLIMQNEMRERQMAMQIAWSREFLKYFGTFFGIATISLAAGAIKRKKPAFLIPIVPLSFIFTYQYDLGYGTLLQRMKSEAEDILETEKTKLELPKGLITFESLEKARREQSKFFSDK</sequence>
<gene>
    <name type="primary">Plgrkt</name>
</gene>
<proteinExistence type="evidence at protein level"/>
<feature type="chain" id="PRO_0000416055" description="Plasminogen receptor (KT)">
    <location>
        <begin position="1"/>
        <end position="147"/>
    </location>
</feature>
<feature type="topological domain" description="Extracellular" evidence="2">
    <location>
        <begin position="1"/>
        <end position="52"/>
    </location>
</feature>
<feature type="transmembrane region" description="Helical" evidence="2">
    <location>
        <begin position="53"/>
        <end position="73"/>
    </location>
</feature>
<feature type="topological domain" description="Cytoplasmic" evidence="2">
    <location>
        <begin position="74"/>
        <end position="78"/>
    </location>
</feature>
<feature type="transmembrane region" description="Helical" evidence="2">
    <location>
        <begin position="79"/>
        <end position="99"/>
    </location>
</feature>
<feature type="topological domain" description="Extracellular" evidence="2">
    <location>
        <begin position="100"/>
        <end position="147"/>
    </location>
</feature>
<protein>
    <recommendedName>
        <fullName>Plasminogen receptor (KT)</fullName>
        <shortName>Plg-R(KT)</shortName>
    </recommendedName>
</protein>
<dbReference type="EMBL" id="CH473953">
    <property type="protein sequence ID" value="EDM13090.1"/>
    <property type="molecule type" value="Genomic_DNA"/>
</dbReference>
<dbReference type="EMBL" id="CH473953">
    <property type="protein sequence ID" value="EDM13091.1"/>
    <property type="molecule type" value="Genomic_DNA"/>
</dbReference>
<dbReference type="EMBL" id="CH473953">
    <property type="protein sequence ID" value="EDM13092.1"/>
    <property type="molecule type" value="Genomic_DNA"/>
</dbReference>
<dbReference type="RefSeq" id="NP_001099817.1">
    <property type="nucleotide sequence ID" value="NM_001106347.1"/>
</dbReference>
<dbReference type="RefSeq" id="XP_006231265.1">
    <property type="nucleotide sequence ID" value="XM_006231203.5"/>
</dbReference>
<dbReference type="RefSeq" id="XP_006231267.1">
    <property type="nucleotide sequence ID" value="XM_006231205.4"/>
</dbReference>
<dbReference type="RefSeq" id="XP_038964779.1">
    <property type="nucleotide sequence ID" value="XM_039108851.2"/>
</dbReference>
<dbReference type="RefSeq" id="XP_038964781.1">
    <property type="nucleotide sequence ID" value="XM_039108853.2"/>
</dbReference>
<dbReference type="RefSeq" id="XP_038964789.1">
    <property type="nucleotide sequence ID" value="XM_039108861.2"/>
</dbReference>
<dbReference type="RefSeq" id="XP_038964792.1">
    <property type="nucleotide sequence ID" value="XM_039108864.2"/>
</dbReference>
<dbReference type="RefSeq" id="XP_063143092.1">
    <property type="nucleotide sequence ID" value="XM_063287022.1"/>
</dbReference>
<dbReference type="FunCoup" id="D4ACN8">
    <property type="interactions" value="204"/>
</dbReference>
<dbReference type="IntAct" id="D4ACN8">
    <property type="interactions" value="1"/>
</dbReference>
<dbReference type="STRING" id="10116.ENSRNOP00000021545"/>
<dbReference type="PhosphoSitePlus" id="D4ACN8"/>
<dbReference type="PaxDb" id="10116-ENSRNOP00000021545"/>
<dbReference type="PeptideAtlas" id="D4ACN8"/>
<dbReference type="Ensembl" id="ENSRNOT00000021544.6">
    <property type="protein sequence ID" value="ENSRNOP00000021545.4"/>
    <property type="gene ID" value="ENSRNOG00000015932.6"/>
</dbReference>
<dbReference type="GeneID" id="293888"/>
<dbReference type="KEGG" id="rno:293888"/>
<dbReference type="UCSC" id="RGD:1306839">
    <property type="organism name" value="rat"/>
</dbReference>
<dbReference type="AGR" id="RGD:1306839"/>
<dbReference type="CTD" id="55848"/>
<dbReference type="RGD" id="1306839">
    <property type="gene designation" value="Plgrkt"/>
</dbReference>
<dbReference type="eggNOG" id="KOG4544">
    <property type="taxonomic scope" value="Eukaryota"/>
</dbReference>
<dbReference type="GeneTree" id="ENSGT00390000000375"/>
<dbReference type="HOGENOM" id="CLU_115107_1_0_1"/>
<dbReference type="InParanoid" id="D4ACN8"/>
<dbReference type="OMA" id="MGYYTDW"/>
<dbReference type="OrthoDB" id="10256697at2759"/>
<dbReference type="PhylomeDB" id="D4ACN8"/>
<dbReference type="TreeFam" id="TF314698"/>
<dbReference type="PRO" id="PR:D4ACN8"/>
<dbReference type="Proteomes" id="UP000002494">
    <property type="component" value="Chromosome 1"/>
</dbReference>
<dbReference type="Proteomes" id="UP000234681">
    <property type="component" value="Chromosome 1"/>
</dbReference>
<dbReference type="Bgee" id="ENSRNOG00000015932">
    <property type="expression patterns" value="Expressed in duodenum and 19 other cell types or tissues"/>
</dbReference>
<dbReference type="GO" id="GO:0005886">
    <property type="term" value="C:plasma membrane"/>
    <property type="evidence" value="ECO:0000266"/>
    <property type="project" value="RGD"/>
</dbReference>
<dbReference type="GO" id="GO:0006935">
    <property type="term" value="P:chemotaxis"/>
    <property type="evidence" value="ECO:0007669"/>
    <property type="project" value="UniProtKB-KW"/>
</dbReference>
<dbReference type="GO" id="GO:0006954">
    <property type="term" value="P:inflammatory response"/>
    <property type="evidence" value="ECO:0007669"/>
    <property type="project" value="UniProtKB-KW"/>
</dbReference>
<dbReference type="GO" id="GO:0010756">
    <property type="term" value="P:positive regulation of plasminogen activation"/>
    <property type="evidence" value="ECO:0000266"/>
    <property type="project" value="RGD"/>
</dbReference>
<dbReference type="InterPro" id="IPR019319">
    <property type="entry name" value="Plg-R(KT)"/>
</dbReference>
<dbReference type="PANTHER" id="PTHR13411">
    <property type="entry name" value="PLASMINOGEN RECEPTOR (KT)"/>
    <property type="match status" value="1"/>
</dbReference>
<dbReference type="PANTHER" id="PTHR13411:SF6">
    <property type="entry name" value="PLASMINOGEN RECEPTOR (KT)"/>
    <property type="match status" value="1"/>
</dbReference>
<dbReference type="Pfam" id="PF10166">
    <property type="entry name" value="DUF2368"/>
    <property type="match status" value="1"/>
</dbReference>
<comment type="function">
    <text evidence="1 3">Receptor for plasminogen. Regulates urokinase plasminogen activator-dependent and stimulates tissue-type plasminogen activator-dependent cell surface plasminogen activation. Proposed to be part of a local catecholaminergic cell plasminogen activation system that regulates neuroendocrine prohormone processing. Involved in regulation of inflammatory response; regulates monocyte chemotactic migration and matrix metalloproteinase activation, such as of MMP2 and MMP9 (By similarity).</text>
</comment>
<comment type="subunit">
    <text evidence="1 3">Interacts with PLAT (By similarity). Interacts with PLAUR.</text>
</comment>
<comment type="subcellular location">
    <subcellularLocation>
        <location evidence="3">Cell membrane</location>
        <topology evidence="3">Multi-pass membrane protein</topology>
    </subcellularLocation>
    <text evidence="1">Colocalizes on the cell surface with urokinase plasminogen activator surface receptor/PLAUR.</text>
</comment>
<comment type="tissue specificity">
    <text evidence="3">Expressed in adrenal medulla (pheochromocytoma).</text>
</comment>
<reference key="1">
    <citation type="journal article" date="2004" name="Nature">
        <title>Genome sequence of the Brown Norway rat yields insights into mammalian evolution.</title>
        <authorList>
            <person name="Gibbs R.A."/>
            <person name="Weinstock G.M."/>
            <person name="Metzker M.L."/>
            <person name="Muzny D.M."/>
            <person name="Sodergren E.J."/>
            <person name="Scherer S."/>
            <person name="Scott G."/>
            <person name="Steffen D."/>
            <person name="Worley K.C."/>
            <person name="Burch P.E."/>
            <person name="Okwuonu G."/>
            <person name="Hines S."/>
            <person name="Lewis L."/>
            <person name="Deramo C."/>
            <person name="Delgado O."/>
            <person name="Dugan-Rocha S."/>
            <person name="Miner G."/>
            <person name="Morgan M."/>
            <person name="Hawes A."/>
            <person name="Gill R."/>
            <person name="Holt R.A."/>
            <person name="Adams M.D."/>
            <person name="Amanatides P.G."/>
            <person name="Baden-Tillson H."/>
            <person name="Barnstead M."/>
            <person name="Chin S."/>
            <person name="Evans C.A."/>
            <person name="Ferriera S."/>
            <person name="Fosler C."/>
            <person name="Glodek A."/>
            <person name="Gu Z."/>
            <person name="Jennings D."/>
            <person name="Kraft C.L."/>
            <person name="Nguyen T."/>
            <person name="Pfannkoch C.M."/>
            <person name="Sitter C."/>
            <person name="Sutton G.G."/>
            <person name="Venter J.C."/>
            <person name="Woodage T."/>
            <person name="Smith D."/>
            <person name="Lee H.-M."/>
            <person name="Gustafson E."/>
            <person name="Cahill P."/>
            <person name="Kana A."/>
            <person name="Doucette-Stamm L."/>
            <person name="Weinstock K."/>
            <person name="Fechtel K."/>
            <person name="Weiss R.B."/>
            <person name="Dunn D.M."/>
            <person name="Green E.D."/>
            <person name="Blakesley R.W."/>
            <person name="Bouffard G.G."/>
            <person name="De Jong P.J."/>
            <person name="Osoegawa K."/>
            <person name="Zhu B."/>
            <person name="Marra M."/>
            <person name="Schein J."/>
            <person name="Bosdet I."/>
            <person name="Fjell C."/>
            <person name="Jones S."/>
            <person name="Krzywinski M."/>
            <person name="Mathewson C."/>
            <person name="Siddiqui A."/>
            <person name="Wye N."/>
            <person name="McPherson J."/>
            <person name="Zhao S."/>
            <person name="Fraser C.M."/>
            <person name="Shetty J."/>
            <person name="Shatsman S."/>
            <person name="Geer K."/>
            <person name="Chen Y."/>
            <person name="Abramzon S."/>
            <person name="Nierman W.C."/>
            <person name="Havlak P.H."/>
            <person name="Chen R."/>
            <person name="Durbin K.J."/>
            <person name="Egan A."/>
            <person name="Ren Y."/>
            <person name="Song X.-Z."/>
            <person name="Li B."/>
            <person name="Liu Y."/>
            <person name="Qin X."/>
            <person name="Cawley S."/>
            <person name="Cooney A.J."/>
            <person name="D'Souza L.M."/>
            <person name="Martin K."/>
            <person name="Wu J.Q."/>
            <person name="Gonzalez-Garay M.L."/>
            <person name="Jackson A.R."/>
            <person name="Kalafus K.J."/>
            <person name="McLeod M.P."/>
            <person name="Milosavljevic A."/>
            <person name="Virk D."/>
            <person name="Volkov A."/>
            <person name="Wheeler D.A."/>
            <person name="Zhang Z."/>
            <person name="Bailey J.A."/>
            <person name="Eichler E.E."/>
            <person name="Tuzun E."/>
            <person name="Birney E."/>
            <person name="Mongin E."/>
            <person name="Ureta-Vidal A."/>
            <person name="Woodwark C."/>
            <person name="Zdobnov E."/>
            <person name="Bork P."/>
            <person name="Suyama M."/>
            <person name="Torrents D."/>
            <person name="Alexandersson M."/>
            <person name="Trask B.J."/>
            <person name="Young J.M."/>
            <person name="Huang H."/>
            <person name="Wang H."/>
            <person name="Xing H."/>
            <person name="Daniels S."/>
            <person name="Gietzen D."/>
            <person name="Schmidt J."/>
            <person name="Stevens K."/>
            <person name="Vitt U."/>
            <person name="Wingrove J."/>
            <person name="Camara F."/>
            <person name="Mar Alba M."/>
            <person name="Abril J.F."/>
            <person name="Guigo R."/>
            <person name="Smit A."/>
            <person name="Dubchak I."/>
            <person name="Rubin E.M."/>
            <person name="Couronne O."/>
            <person name="Poliakov A."/>
            <person name="Huebner N."/>
            <person name="Ganten D."/>
            <person name="Goesele C."/>
            <person name="Hummel O."/>
            <person name="Kreitler T."/>
            <person name="Lee Y.-A."/>
            <person name="Monti J."/>
            <person name="Schulz H."/>
            <person name="Zimdahl H."/>
            <person name="Himmelbauer H."/>
            <person name="Lehrach H."/>
            <person name="Jacob H.J."/>
            <person name="Bromberg S."/>
            <person name="Gullings-Handley J."/>
            <person name="Jensen-Seaman M.I."/>
            <person name="Kwitek A.E."/>
            <person name="Lazar J."/>
            <person name="Pasko D."/>
            <person name="Tonellato P.J."/>
            <person name="Twigger S."/>
            <person name="Ponting C.P."/>
            <person name="Duarte J.M."/>
            <person name="Rice S."/>
            <person name="Goodstadt L."/>
            <person name="Beatson S.A."/>
            <person name="Emes R.D."/>
            <person name="Winter E.E."/>
            <person name="Webber C."/>
            <person name="Brandt P."/>
            <person name="Nyakatura G."/>
            <person name="Adetobi M."/>
            <person name="Chiaromonte F."/>
            <person name="Elnitski L."/>
            <person name="Eswara P."/>
            <person name="Hardison R.C."/>
            <person name="Hou M."/>
            <person name="Kolbe D."/>
            <person name="Makova K."/>
            <person name="Miller W."/>
            <person name="Nekrutenko A."/>
            <person name="Riemer C."/>
            <person name="Schwartz S."/>
            <person name="Taylor J."/>
            <person name="Yang S."/>
            <person name="Zhang Y."/>
            <person name="Lindpaintner K."/>
            <person name="Andrews T.D."/>
            <person name="Caccamo M."/>
            <person name="Clamp M."/>
            <person name="Clarke L."/>
            <person name="Curwen V."/>
            <person name="Durbin R.M."/>
            <person name="Eyras E."/>
            <person name="Searle S.M."/>
            <person name="Cooper G.M."/>
            <person name="Batzoglou S."/>
            <person name="Brudno M."/>
            <person name="Sidow A."/>
            <person name="Stone E.A."/>
            <person name="Payseur B.A."/>
            <person name="Bourque G."/>
            <person name="Lopez-Otin C."/>
            <person name="Puente X.S."/>
            <person name="Chakrabarti K."/>
            <person name="Chatterji S."/>
            <person name="Dewey C."/>
            <person name="Pachter L."/>
            <person name="Bray N."/>
            <person name="Yap V.B."/>
            <person name="Caspi A."/>
            <person name="Tesler G."/>
            <person name="Pevzner P.A."/>
            <person name="Haussler D."/>
            <person name="Roskin K.M."/>
            <person name="Baertsch R."/>
            <person name="Clawson H."/>
            <person name="Furey T.S."/>
            <person name="Hinrichs A.S."/>
            <person name="Karolchik D."/>
            <person name="Kent W.J."/>
            <person name="Rosenbloom K.R."/>
            <person name="Trumbower H."/>
            <person name="Weirauch M."/>
            <person name="Cooper D.N."/>
            <person name="Stenson P.D."/>
            <person name="Ma B."/>
            <person name="Brent M."/>
            <person name="Arumugam M."/>
            <person name="Shteynberg D."/>
            <person name="Copley R.R."/>
            <person name="Taylor M.S."/>
            <person name="Riethman H."/>
            <person name="Mudunuri U."/>
            <person name="Peterson J."/>
            <person name="Guyer M."/>
            <person name="Felsenfeld A."/>
            <person name="Old S."/>
            <person name="Mockrin S."/>
            <person name="Collins F.S."/>
        </authorList>
    </citation>
    <scope>NUCLEOTIDE SEQUENCE [LARGE SCALE GENOMIC DNA]</scope>
    <source>
        <strain>Brown Norway</strain>
    </source>
</reference>
<reference key="2">
    <citation type="submission" date="2005-07" db="EMBL/GenBank/DDBJ databases">
        <authorList>
            <person name="Mural R.J."/>
            <person name="Adams M.D."/>
            <person name="Myers E.W."/>
            <person name="Smith H.O."/>
            <person name="Venter J.C."/>
        </authorList>
    </citation>
    <scope>NUCLEOTIDE SEQUENCE [LARGE SCALE GENOMIC DNA]</scope>
</reference>
<reference key="3">
    <citation type="journal article" date="2011" name="J. Biol. Chem.">
        <title>The novel plasminogen receptor, plasminogen receptor(KT) (Plg-R(KT)), regulates catecholamine release.</title>
        <authorList>
            <person name="Bai H."/>
            <person name="Baik N."/>
            <person name="Kiosses W.B."/>
            <person name="Krajewski S."/>
            <person name="Miles L.A."/>
            <person name="Parmer R.J."/>
        </authorList>
    </citation>
    <scope>FUNCTION IN NEUROENDOCRINE PROHORMONE PROCESSING</scope>
    <scope>TISSUE SPECIFICITY</scope>
    <scope>SUBCELLULAR LOCATION</scope>
    <scope>INTERACTION WITH PLAUR</scope>
</reference>